<reference key="1">
    <citation type="journal article" date="2010" name="Asian J. Androl.">
        <title>Glucose-regulated protein precursor (GRP78) and tumor rejection antigen (GP96) are unique to hamster caput epididymal spermatozoa.</title>
        <authorList>
            <person name="Kameshwari D.B."/>
            <person name="Bhande S."/>
            <person name="Sundaram C.S."/>
            <person name="Kota V."/>
            <person name="Siva A.B."/>
            <person name="Shivaji S."/>
        </authorList>
    </citation>
    <scope>IDENTIFICATION BY MASS SPECTROMETRY</scope>
</reference>
<organism>
    <name type="scientific">Mesocricetus auratus</name>
    <name type="common">Golden hamster</name>
    <dbReference type="NCBI Taxonomy" id="10036"/>
    <lineage>
        <taxon>Eukaryota</taxon>
        <taxon>Metazoa</taxon>
        <taxon>Chordata</taxon>
        <taxon>Craniata</taxon>
        <taxon>Vertebrata</taxon>
        <taxon>Euteleostomi</taxon>
        <taxon>Mammalia</taxon>
        <taxon>Eutheria</taxon>
        <taxon>Euarchontoglires</taxon>
        <taxon>Glires</taxon>
        <taxon>Rodentia</taxon>
        <taxon>Myomorpha</taxon>
        <taxon>Muroidea</taxon>
        <taxon>Cricetidae</taxon>
        <taxon>Cricetinae</taxon>
        <taxon>Mesocricetus</taxon>
    </lineage>
</organism>
<comment type="function">
    <text evidence="1">2-oxoglutarate dehydrogenase (E1) component of the 2-oxoglutarate dehydrogenase complex (OGDHC), which mediates the decarboxylation of alpha-ketoglutarate. The 2-oxoglutarate dehydrogenase complex catalyzes the overall conversion of 2-oxoglutarate to succinyl-CoA and CO(2). The 2-oxoglutarate dehydrogenase complex is mainly active in the mitochondrion. A fraction of the 2-oxoglutarate dehydrogenase complex also localizes in the nucleus and is required for lysine succinylation of histones: associates with KAT2A on chromatin and provides succinyl-CoA to histone succinyltransferase KAT2A.</text>
</comment>
<comment type="catalytic activity">
    <reaction evidence="1">
        <text>N(6)-[(R)-lipoyl]-L-lysyl-[protein] + 2-oxoglutarate + H(+) = N(6)-[(R)-S(8)-succinyldihydrolipoyl]-L-lysyl-[protein] + CO2</text>
        <dbReference type="Rhea" id="RHEA:12188"/>
        <dbReference type="Rhea" id="RHEA-COMP:10474"/>
        <dbReference type="Rhea" id="RHEA-COMP:20092"/>
        <dbReference type="ChEBI" id="CHEBI:15378"/>
        <dbReference type="ChEBI" id="CHEBI:16526"/>
        <dbReference type="ChEBI" id="CHEBI:16810"/>
        <dbReference type="ChEBI" id="CHEBI:83099"/>
        <dbReference type="ChEBI" id="CHEBI:83120"/>
        <dbReference type="EC" id="1.2.4.2"/>
    </reaction>
    <physiologicalReaction direction="left-to-right" evidence="1">
        <dbReference type="Rhea" id="RHEA:12189"/>
    </physiologicalReaction>
</comment>
<comment type="cofactor">
    <cofactor evidence="1">
        <name>thiamine diphosphate</name>
        <dbReference type="ChEBI" id="CHEBI:58937"/>
    </cofactor>
    <cofactor evidence="1">
        <name>Mg(2+)</name>
        <dbReference type="ChEBI" id="CHEBI:18420"/>
    </cofactor>
</comment>
<comment type="activity regulation">
    <text evidence="1">Calcium ions and ADP stimulate, whereas ATP and NADH reduce catalytic activity.</text>
</comment>
<comment type="subunit">
    <text evidence="1">Homodimer (By similarity). The 2-oxoglutarate dehydrogenase complex is composed of OGDH (2-oxoglutarate dehydrogenase; E1), DLST (dihydrolipoamide succinyltransferase; E2) and DLD (dihydrolipoamide dehydrogenase; E3). It contains multiple copies of the three enzymatic components (E1, E2 and E3). In the nucleus, the 2-oxoglutarate dehydrogenase complex associates with KAT2A. Interacts with ABHD11; this interaction maintains the functional lipoylation of the 2-oxoglutarate dehydrogenase complex (By similarity).</text>
</comment>
<comment type="subcellular location">
    <subcellularLocation>
        <location evidence="1">Mitochondrion matrix</location>
    </subcellularLocation>
    <subcellularLocation>
        <location evidence="1">Nucleus</location>
    </subcellularLocation>
    <text evidence="1">Mainly localizes in the mitochondrion. A small fraction localizes to the nucleus, where the 2-oxoglutarate dehydrogenase complex is required for histone succinylation.</text>
</comment>
<comment type="similarity">
    <text evidence="3">Belongs to the alpha-ketoglutarate dehydrogenase family.</text>
</comment>
<evidence type="ECO:0000250" key="1">
    <source>
        <dbReference type="UniProtKB" id="Q02218"/>
    </source>
</evidence>
<evidence type="ECO:0000250" key="2">
    <source>
        <dbReference type="UniProtKB" id="Q60597"/>
    </source>
</evidence>
<evidence type="ECO:0000305" key="3"/>
<proteinExistence type="evidence at protein level"/>
<keyword id="KW-0324">Glycolysis</keyword>
<keyword id="KW-0460">Magnesium</keyword>
<keyword id="KW-0496">Mitochondrion</keyword>
<keyword id="KW-0539">Nucleus</keyword>
<keyword id="KW-0560">Oxidoreductase</keyword>
<keyword id="KW-0597">Phosphoprotein</keyword>
<keyword id="KW-1185">Reference proteome</keyword>
<keyword id="KW-0786">Thiamine pyrophosphate</keyword>
<dbReference type="EC" id="1.2.4.2" evidence="1"/>
<dbReference type="SMR" id="P86231"/>
<dbReference type="STRING" id="10036.ENSMAUP00000025228"/>
<dbReference type="Proteomes" id="UP000189706">
    <property type="component" value="Unplaced"/>
</dbReference>
<dbReference type="GO" id="GO:0005759">
    <property type="term" value="C:mitochondrial matrix"/>
    <property type="evidence" value="ECO:0007669"/>
    <property type="project" value="UniProtKB-SubCell"/>
</dbReference>
<dbReference type="GO" id="GO:0005739">
    <property type="term" value="C:mitochondrion"/>
    <property type="evidence" value="ECO:0000250"/>
    <property type="project" value="UniProtKB"/>
</dbReference>
<dbReference type="GO" id="GO:0005634">
    <property type="term" value="C:nucleus"/>
    <property type="evidence" value="ECO:0000250"/>
    <property type="project" value="UniProtKB"/>
</dbReference>
<dbReference type="GO" id="GO:0045252">
    <property type="term" value="C:oxoglutarate dehydrogenase complex"/>
    <property type="evidence" value="ECO:0000250"/>
    <property type="project" value="UniProtKB"/>
</dbReference>
<dbReference type="GO" id="GO:0004591">
    <property type="term" value="F:oxoglutarate dehydrogenase (succinyl-transferring) activity"/>
    <property type="evidence" value="ECO:0000250"/>
    <property type="project" value="UniProtKB"/>
</dbReference>
<dbReference type="GO" id="GO:0030976">
    <property type="term" value="F:thiamine pyrophosphate binding"/>
    <property type="evidence" value="ECO:0000250"/>
    <property type="project" value="UniProtKB"/>
</dbReference>
<dbReference type="GO" id="GO:0006103">
    <property type="term" value="P:2-oxoglutarate metabolic process"/>
    <property type="evidence" value="ECO:0000250"/>
    <property type="project" value="UniProtKB"/>
</dbReference>
<dbReference type="GO" id="GO:0006096">
    <property type="term" value="P:glycolytic process"/>
    <property type="evidence" value="ECO:0007669"/>
    <property type="project" value="UniProtKB-KW"/>
</dbReference>
<dbReference type="GO" id="GO:0006104">
    <property type="term" value="P:succinyl-CoA metabolic process"/>
    <property type="evidence" value="ECO:0000250"/>
    <property type="project" value="UniProtKB"/>
</dbReference>
<dbReference type="GO" id="GO:0006099">
    <property type="term" value="P:tricarboxylic acid cycle"/>
    <property type="evidence" value="ECO:0007669"/>
    <property type="project" value="TreeGrafter"/>
</dbReference>
<dbReference type="Gene3D" id="3.40.50.12470">
    <property type="match status" value="1"/>
</dbReference>
<dbReference type="InterPro" id="IPR011603">
    <property type="entry name" value="2oxoglutarate_DH_E1"/>
</dbReference>
<dbReference type="PANTHER" id="PTHR23152">
    <property type="entry name" value="2-OXOGLUTARATE DEHYDROGENASE"/>
    <property type="match status" value="1"/>
</dbReference>
<dbReference type="PANTHER" id="PTHR23152:SF7">
    <property type="entry name" value="2-OXOGLUTARATE DEHYDROGENASE COMPLEX COMPONENT E1"/>
    <property type="match status" value="1"/>
</dbReference>
<accession>P86231</accession>
<name>ODO1_MESAU</name>
<gene>
    <name evidence="1" type="primary">OGDH</name>
</gene>
<protein>
    <recommendedName>
        <fullName evidence="1">2-oxoglutarate dehydrogenase, mitochondrial</fullName>
        <ecNumber evidence="1">1.2.4.2</ecNumber>
    </recommendedName>
    <alternativeName>
        <fullName evidence="1">2-oxoglutarate dehydrogenase complex component E1</fullName>
        <shortName evidence="1">OGDC-E1</shortName>
    </alternativeName>
    <alternativeName>
        <fullName evidence="1">Alpha-ketoglutarate dehydrogenase</fullName>
    </alternativeName>
</protein>
<feature type="chain" id="PRO_0000394738" description="2-oxoglutarate dehydrogenase, mitochondrial">
    <location>
        <begin position="1"/>
        <end position="180" status="greater than"/>
    </location>
</feature>
<feature type="binding site" evidence="1">
    <location>
        <position position="64"/>
    </location>
    <ligand>
        <name>thiamine diphosphate</name>
        <dbReference type="ChEBI" id="CHEBI:58937"/>
    </ligand>
</feature>
<feature type="modified residue" description="N6-succinyllysine" evidence="2">
    <location>
        <position position="14"/>
    </location>
</feature>
<feature type="modified residue" description="Phosphoserine" evidence="2">
    <location>
        <position position="40"/>
    </location>
</feature>
<feature type="non-consecutive residues" evidence="3">
    <location>
        <begin position="10"/>
        <end position="11"/>
    </location>
</feature>
<feature type="non-consecutive residues" evidence="3">
    <location>
        <begin position="41"/>
        <end position="42"/>
    </location>
</feature>
<feature type="non-consecutive residues" evidence="3">
    <location>
        <begin position="54"/>
        <end position="55"/>
    </location>
</feature>
<feature type="non-consecutive residues" evidence="3">
    <location>
        <begin position="64"/>
        <end position="65"/>
    </location>
</feature>
<feature type="non-consecutive residues" evidence="3">
    <location>
        <begin position="75"/>
        <end position="76"/>
    </location>
</feature>
<feature type="non-consecutive residues" evidence="3">
    <location>
        <begin position="84"/>
        <end position="85"/>
    </location>
</feature>
<feature type="non-consecutive residues" evidence="3">
    <location>
        <begin position="94"/>
        <end position="95"/>
    </location>
</feature>
<feature type="non-consecutive residues" evidence="3">
    <location>
        <begin position="102"/>
        <end position="103"/>
    </location>
</feature>
<feature type="non-consecutive residues" evidence="3">
    <location>
        <begin position="142"/>
        <end position="143"/>
    </location>
</feature>
<feature type="non-consecutive residues" evidence="3">
    <location>
        <begin position="149"/>
        <end position="150"/>
    </location>
</feature>
<feature type="non-consecutive residues" evidence="3">
    <location>
        <begin position="158"/>
        <end position="159"/>
    </location>
</feature>
<feature type="non-terminal residue">
    <location>
        <position position="180"/>
    </location>
</feature>
<sequence length="180" mass="21097">MFHLRTCAAKSVHKSWDIFFRNTNAGAPPGTAYQSPLSLSRLGFYGLHESDLDKSTRFEEFLQRGRLNVLANVIRYHLGMYHRRSSPYPTDVARICEEAFTRRQILLPFRKPLIVFTPKSLLRHPEARTSFDEMLPGTHFQRVYYDLTRAKPVWYAGRKTHLTELQRFLDTAFDLDAFKK</sequence>